<dbReference type="EMBL" id="FN543093">
    <property type="protein sequence ID" value="CBA32017.1"/>
    <property type="molecule type" value="Genomic_DNA"/>
</dbReference>
<dbReference type="SMR" id="C9XVF1"/>
<dbReference type="KEGG" id="ctu:CTU_27070"/>
<dbReference type="PATRIC" id="fig|693216.3.peg.2560"/>
<dbReference type="HOGENOM" id="CLU_113664_3_2_6"/>
<dbReference type="Proteomes" id="UP000002069">
    <property type="component" value="Chromosome"/>
</dbReference>
<dbReference type="GO" id="GO:0005737">
    <property type="term" value="C:cytoplasm"/>
    <property type="evidence" value="ECO:0007669"/>
    <property type="project" value="UniProtKB-SubCell"/>
</dbReference>
<dbReference type="GO" id="GO:0008657">
    <property type="term" value="F:DNA topoisomerase type II (double strand cut, ATP-hydrolyzing) inhibitor activity"/>
    <property type="evidence" value="ECO:0007669"/>
    <property type="project" value="UniProtKB-UniRule"/>
</dbReference>
<dbReference type="Gene3D" id="3.20.80.10">
    <property type="entry name" value="Regulatory factor, effector binding domain"/>
    <property type="match status" value="1"/>
</dbReference>
<dbReference type="HAMAP" id="MF_01896">
    <property type="entry name" value="DNA_gyrase_inhibitor"/>
    <property type="match status" value="1"/>
</dbReference>
<dbReference type="InterPro" id="IPR010499">
    <property type="entry name" value="AraC_E-bd"/>
</dbReference>
<dbReference type="InterPro" id="IPR050908">
    <property type="entry name" value="DNA_gyrase_inhibitor"/>
</dbReference>
<dbReference type="InterPro" id="IPR024911">
    <property type="entry name" value="DNA_gyrase_inhibitor_GyrI"/>
</dbReference>
<dbReference type="InterPro" id="IPR029442">
    <property type="entry name" value="GyrI-like"/>
</dbReference>
<dbReference type="InterPro" id="IPR011256">
    <property type="entry name" value="Reg_factor_effector_dom_sf"/>
</dbReference>
<dbReference type="NCBIfam" id="NF007451">
    <property type="entry name" value="PRK10016.1"/>
    <property type="match status" value="1"/>
</dbReference>
<dbReference type="PANTHER" id="PTHR40055:SF2">
    <property type="entry name" value="DNA GYRASE INHIBITOR"/>
    <property type="match status" value="1"/>
</dbReference>
<dbReference type="PANTHER" id="PTHR40055">
    <property type="entry name" value="TRANSCRIPTIONAL REGULATOR YGIV-RELATED"/>
    <property type="match status" value="1"/>
</dbReference>
<dbReference type="Pfam" id="PF06445">
    <property type="entry name" value="GyrI-like"/>
    <property type="match status" value="1"/>
</dbReference>
<dbReference type="SMART" id="SM00871">
    <property type="entry name" value="AraC_E_bind"/>
    <property type="match status" value="1"/>
</dbReference>
<dbReference type="SUPFAM" id="SSF55136">
    <property type="entry name" value="Probable bacterial effector-binding domain"/>
    <property type="match status" value="1"/>
</dbReference>
<name>SBMC_CROTZ</name>
<keyword id="KW-0963">Cytoplasm</keyword>
<keyword id="KW-0346">Stress response</keyword>
<accession>C9XVF1</accession>
<protein>
    <recommendedName>
        <fullName evidence="1">DNA gyrase inhibitor</fullName>
    </recommendedName>
</protein>
<organism>
    <name type="scientific">Cronobacter turicensis (strain DSM 18703 / CCUG 55852 / LMG 23827 / z3032)</name>
    <dbReference type="NCBI Taxonomy" id="693216"/>
    <lineage>
        <taxon>Bacteria</taxon>
        <taxon>Pseudomonadati</taxon>
        <taxon>Pseudomonadota</taxon>
        <taxon>Gammaproteobacteria</taxon>
        <taxon>Enterobacterales</taxon>
        <taxon>Enterobacteriaceae</taxon>
        <taxon>Cronobacter</taxon>
    </lineage>
</organism>
<evidence type="ECO:0000255" key="1">
    <source>
        <dbReference type="HAMAP-Rule" id="MF_01896"/>
    </source>
</evidence>
<sequence length="157" mass="18099">MDYTIEHVLTRKIAGFHLVGPWEKTVPQGFEQLTLWVDNFHIQPQAWLAVYYDNPQQVAPEKLRADTVVEVPADFTLPENSVGVILTDLPGGQYAVARARVENHDFGTPWLAFFTRLHQDVRYQMAARPCFEIYLNDGKRDGYWEIDMYIPVQTSGE</sequence>
<gene>
    <name evidence="1" type="primary">sbmC</name>
    <name type="ordered locus">Ctu_27070</name>
</gene>
<reference key="1">
    <citation type="journal article" date="2011" name="J. Bacteriol.">
        <title>Complete genome sequence of Cronobacter turicensis LMG 23827, a food-borne pathogen causing deaths in neonates.</title>
        <authorList>
            <person name="Stephan R."/>
            <person name="Lehner A."/>
            <person name="Tischler P."/>
            <person name="Rattei T."/>
        </authorList>
    </citation>
    <scope>NUCLEOTIDE SEQUENCE [LARGE SCALE GENOMIC DNA]</scope>
    <source>
        <strain>DSM 18703 / CCUG 55852 / LMG 23827 / z3032</strain>
    </source>
</reference>
<feature type="chain" id="PRO_0000409692" description="DNA gyrase inhibitor">
    <location>
        <begin position="1"/>
        <end position="157"/>
    </location>
</feature>
<proteinExistence type="inferred from homology"/>
<comment type="function">
    <text evidence="1">Inhibits the supercoiling activity of DNA gyrase. Acts by inhibiting DNA gyrase at an early step, prior to (or at the step of) binding of DNA by the gyrase. It protects cells against toxins that target DNA gyrase, by inhibiting activity of these toxins and reducing the formation of lethal double-strand breaks in the cell.</text>
</comment>
<comment type="subunit">
    <text evidence="1">Interacts with DNA gyrase.</text>
</comment>
<comment type="subcellular location">
    <subcellularLocation>
        <location evidence="1">Cytoplasm</location>
    </subcellularLocation>
</comment>
<comment type="similarity">
    <text evidence="1">Belongs to the DNA gyrase inhibitor family.</text>
</comment>